<reference key="1">
    <citation type="journal article" date="2004" name="Nucleic Acids Res.">
        <title>The genome sequence of Bacillus cereus ATCC 10987 reveals metabolic adaptations and a large plasmid related to Bacillus anthracis pXO1.</title>
        <authorList>
            <person name="Rasko D.A."/>
            <person name="Ravel J."/>
            <person name="Oekstad O.A."/>
            <person name="Helgason E."/>
            <person name="Cer R.Z."/>
            <person name="Jiang L."/>
            <person name="Shores K.A."/>
            <person name="Fouts D.E."/>
            <person name="Tourasse N.J."/>
            <person name="Angiuoli S.V."/>
            <person name="Kolonay J.F."/>
            <person name="Nelson W.C."/>
            <person name="Kolstoe A.-B."/>
            <person name="Fraser C.M."/>
            <person name="Read T.D."/>
        </authorList>
    </citation>
    <scope>NUCLEOTIDE SEQUENCE [LARGE SCALE GENOMIC DNA]</scope>
    <source>
        <strain>ATCC 10987 / NRS 248</strain>
    </source>
</reference>
<proteinExistence type="inferred from homology"/>
<comment type="function">
    <text evidence="1">Plays an essential role in the initiation and regulation of chromosomal replication. ATP-DnaA binds to the origin of replication (oriC) to initiate formation of the DNA replication initiation complex once per cell cycle. Binds the DnaA box (a 9 base pair repeat at the origin) and separates the double-stranded (ds)DNA. Forms a right-handed helical filament on oriC DNA; dsDNA binds to the exterior of the filament while single-stranded (ss)DNA is stabiized in the filament's interior. The ATP-DnaA-oriC complex binds and stabilizes one strand of the AT-rich DNA unwinding element (DUE), permitting loading of DNA polymerase. After initiation quickly degrades to an ADP-DnaA complex that is not apt for DNA replication. Binds acidic phospholipids.</text>
</comment>
<comment type="subunit">
    <text evidence="1">Oligomerizes as a right-handed, spiral filament on DNA at oriC.</text>
</comment>
<comment type="subcellular location">
    <subcellularLocation>
        <location evidence="1">Cytoplasm</location>
    </subcellularLocation>
</comment>
<comment type="domain">
    <text evidence="1">Domain I is involved in oligomerization and binding regulators, domain II is flexibile and of varying length in different bacteria, domain III forms the AAA+ region, while domain IV binds dsDNA.</text>
</comment>
<comment type="similarity">
    <text evidence="1">Belongs to the DnaA family.</text>
</comment>
<accession>Q73FK5</accession>
<feature type="chain" id="PRO_0000114125" description="Chromosomal replication initiator protein DnaA">
    <location>
        <begin position="1"/>
        <end position="446"/>
    </location>
</feature>
<feature type="region of interest" description="Domain I, interacts with DnaA modulators" evidence="1">
    <location>
        <begin position="1"/>
        <end position="92"/>
    </location>
</feature>
<feature type="region of interest" description="Disordered" evidence="2">
    <location>
        <begin position="87"/>
        <end position="107"/>
    </location>
</feature>
<feature type="region of interest" description="Domain II" evidence="1">
    <location>
        <begin position="93"/>
        <end position="109"/>
    </location>
</feature>
<feature type="region of interest" description="Domain III, AAA+ region" evidence="1">
    <location>
        <begin position="110"/>
        <end position="326"/>
    </location>
</feature>
<feature type="region of interest" description="Domain IV, binds dsDNA" evidence="1">
    <location>
        <begin position="327"/>
        <end position="446"/>
    </location>
</feature>
<feature type="compositionally biased region" description="Polar residues" evidence="2">
    <location>
        <begin position="96"/>
        <end position="107"/>
    </location>
</feature>
<feature type="binding site" evidence="1">
    <location>
        <position position="154"/>
    </location>
    <ligand>
        <name>ATP</name>
        <dbReference type="ChEBI" id="CHEBI:30616"/>
    </ligand>
</feature>
<feature type="binding site" evidence="1">
    <location>
        <position position="156"/>
    </location>
    <ligand>
        <name>ATP</name>
        <dbReference type="ChEBI" id="CHEBI:30616"/>
    </ligand>
</feature>
<feature type="binding site" evidence="1">
    <location>
        <position position="157"/>
    </location>
    <ligand>
        <name>ATP</name>
        <dbReference type="ChEBI" id="CHEBI:30616"/>
    </ligand>
</feature>
<feature type="binding site" evidence="1">
    <location>
        <position position="158"/>
    </location>
    <ligand>
        <name>ATP</name>
        <dbReference type="ChEBI" id="CHEBI:30616"/>
    </ligand>
</feature>
<keyword id="KW-0067">ATP-binding</keyword>
<keyword id="KW-0963">Cytoplasm</keyword>
<keyword id="KW-0235">DNA replication</keyword>
<keyword id="KW-0238">DNA-binding</keyword>
<keyword id="KW-0446">Lipid-binding</keyword>
<keyword id="KW-0547">Nucleotide-binding</keyword>
<protein>
    <recommendedName>
        <fullName evidence="1">Chromosomal replication initiator protein DnaA</fullName>
    </recommendedName>
</protein>
<organism>
    <name type="scientific">Bacillus cereus (strain ATCC 10987 / NRS 248)</name>
    <dbReference type="NCBI Taxonomy" id="222523"/>
    <lineage>
        <taxon>Bacteria</taxon>
        <taxon>Bacillati</taxon>
        <taxon>Bacillota</taxon>
        <taxon>Bacilli</taxon>
        <taxon>Bacillales</taxon>
        <taxon>Bacillaceae</taxon>
        <taxon>Bacillus</taxon>
        <taxon>Bacillus cereus group</taxon>
    </lineage>
</organism>
<gene>
    <name evidence="1" type="primary">dnaA</name>
    <name type="ordered locus">BCE_0001</name>
</gene>
<dbReference type="EMBL" id="AE017194">
    <property type="protein sequence ID" value="AAS38937.1"/>
    <property type="molecule type" value="Genomic_DNA"/>
</dbReference>
<dbReference type="SMR" id="Q73FK5"/>
<dbReference type="KEGG" id="bca:BCE_0001"/>
<dbReference type="HOGENOM" id="CLU_026910_3_1_9"/>
<dbReference type="Proteomes" id="UP000002527">
    <property type="component" value="Chromosome"/>
</dbReference>
<dbReference type="GO" id="GO:0005737">
    <property type="term" value="C:cytoplasm"/>
    <property type="evidence" value="ECO:0007669"/>
    <property type="project" value="UniProtKB-SubCell"/>
</dbReference>
<dbReference type="GO" id="GO:0005886">
    <property type="term" value="C:plasma membrane"/>
    <property type="evidence" value="ECO:0007669"/>
    <property type="project" value="TreeGrafter"/>
</dbReference>
<dbReference type="GO" id="GO:0005524">
    <property type="term" value="F:ATP binding"/>
    <property type="evidence" value="ECO:0007669"/>
    <property type="project" value="UniProtKB-UniRule"/>
</dbReference>
<dbReference type="GO" id="GO:0016887">
    <property type="term" value="F:ATP hydrolysis activity"/>
    <property type="evidence" value="ECO:0007669"/>
    <property type="project" value="InterPro"/>
</dbReference>
<dbReference type="GO" id="GO:0003688">
    <property type="term" value="F:DNA replication origin binding"/>
    <property type="evidence" value="ECO:0007669"/>
    <property type="project" value="UniProtKB-UniRule"/>
</dbReference>
<dbReference type="GO" id="GO:0008289">
    <property type="term" value="F:lipid binding"/>
    <property type="evidence" value="ECO:0007669"/>
    <property type="project" value="UniProtKB-KW"/>
</dbReference>
<dbReference type="GO" id="GO:0006270">
    <property type="term" value="P:DNA replication initiation"/>
    <property type="evidence" value="ECO:0007669"/>
    <property type="project" value="UniProtKB-UniRule"/>
</dbReference>
<dbReference type="GO" id="GO:0006275">
    <property type="term" value="P:regulation of DNA replication"/>
    <property type="evidence" value="ECO:0007669"/>
    <property type="project" value="UniProtKB-UniRule"/>
</dbReference>
<dbReference type="CDD" id="cd00009">
    <property type="entry name" value="AAA"/>
    <property type="match status" value="1"/>
</dbReference>
<dbReference type="CDD" id="cd06571">
    <property type="entry name" value="Bac_DnaA_C"/>
    <property type="match status" value="1"/>
</dbReference>
<dbReference type="FunFam" id="1.10.1750.10:FF:000003">
    <property type="entry name" value="Chromosomal replication initiator protein DnaA"/>
    <property type="match status" value="1"/>
</dbReference>
<dbReference type="FunFam" id="1.10.8.60:FF:000003">
    <property type="entry name" value="Chromosomal replication initiator protein DnaA"/>
    <property type="match status" value="1"/>
</dbReference>
<dbReference type="FunFam" id="3.30.300.180:FF:000002">
    <property type="entry name" value="Chromosomal replication initiator protein DnaA"/>
    <property type="match status" value="1"/>
</dbReference>
<dbReference type="FunFam" id="3.40.50.300:FF:000150">
    <property type="entry name" value="Chromosomal replication initiator protein DnaA"/>
    <property type="match status" value="1"/>
</dbReference>
<dbReference type="Gene3D" id="1.10.1750.10">
    <property type="match status" value="1"/>
</dbReference>
<dbReference type="Gene3D" id="1.10.8.60">
    <property type="match status" value="1"/>
</dbReference>
<dbReference type="Gene3D" id="3.30.300.180">
    <property type="match status" value="1"/>
</dbReference>
<dbReference type="Gene3D" id="3.40.50.300">
    <property type="entry name" value="P-loop containing nucleotide triphosphate hydrolases"/>
    <property type="match status" value="1"/>
</dbReference>
<dbReference type="HAMAP" id="MF_00377">
    <property type="entry name" value="DnaA_bact"/>
    <property type="match status" value="1"/>
</dbReference>
<dbReference type="InterPro" id="IPR003593">
    <property type="entry name" value="AAA+_ATPase"/>
</dbReference>
<dbReference type="InterPro" id="IPR001957">
    <property type="entry name" value="Chromosome_initiator_DnaA"/>
</dbReference>
<dbReference type="InterPro" id="IPR020591">
    <property type="entry name" value="Chromosome_initiator_DnaA-like"/>
</dbReference>
<dbReference type="InterPro" id="IPR018312">
    <property type="entry name" value="Chromosome_initiator_DnaA_CS"/>
</dbReference>
<dbReference type="InterPro" id="IPR013159">
    <property type="entry name" value="DnaA_C"/>
</dbReference>
<dbReference type="InterPro" id="IPR013317">
    <property type="entry name" value="DnaA_dom"/>
</dbReference>
<dbReference type="InterPro" id="IPR024633">
    <property type="entry name" value="DnaA_N_dom"/>
</dbReference>
<dbReference type="InterPro" id="IPR038454">
    <property type="entry name" value="DnaA_N_sf"/>
</dbReference>
<dbReference type="InterPro" id="IPR027417">
    <property type="entry name" value="P-loop_NTPase"/>
</dbReference>
<dbReference type="InterPro" id="IPR010921">
    <property type="entry name" value="Trp_repressor/repl_initiator"/>
</dbReference>
<dbReference type="NCBIfam" id="TIGR00362">
    <property type="entry name" value="DnaA"/>
    <property type="match status" value="1"/>
</dbReference>
<dbReference type="NCBIfam" id="NF010686">
    <property type="entry name" value="PRK14086.1"/>
    <property type="match status" value="1"/>
</dbReference>
<dbReference type="PANTHER" id="PTHR30050">
    <property type="entry name" value="CHROMOSOMAL REPLICATION INITIATOR PROTEIN DNAA"/>
    <property type="match status" value="1"/>
</dbReference>
<dbReference type="PANTHER" id="PTHR30050:SF2">
    <property type="entry name" value="CHROMOSOMAL REPLICATION INITIATOR PROTEIN DNAA"/>
    <property type="match status" value="1"/>
</dbReference>
<dbReference type="Pfam" id="PF00308">
    <property type="entry name" value="Bac_DnaA"/>
    <property type="match status" value="1"/>
</dbReference>
<dbReference type="Pfam" id="PF08299">
    <property type="entry name" value="Bac_DnaA_C"/>
    <property type="match status" value="1"/>
</dbReference>
<dbReference type="Pfam" id="PF11638">
    <property type="entry name" value="DnaA_N"/>
    <property type="match status" value="1"/>
</dbReference>
<dbReference type="PRINTS" id="PR00051">
    <property type="entry name" value="DNAA"/>
</dbReference>
<dbReference type="SMART" id="SM00382">
    <property type="entry name" value="AAA"/>
    <property type="match status" value="1"/>
</dbReference>
<dbReference type="SMART" id="SM00760">
    <property type="entry name" value="Bac_DnaA_C"/>
    <property type="match status" value="1"/>
</dbReference>
<dbReference type="SUPFAM" id="SSF52540">
    <property type="entry name" value="P-loop containing nucleoside triphosphate hydrolases"/>
    <property type="match status" value="1"/>
</dbReference>
<dbReference type="SUPFAM" id="SSF48295">
    <property type="entry name" value="TrpR-like"/>
    <property type="match status" value="1"/>
</dbReference>
<dbReference type="PROSITE" id="PS01008">
    <property type="entry name" value="DNAA"/>
    <property type="match status" value="1"/>
</dbReference>
<evidence type="ECO:0000255" key="1">
    <source>
        <dbReference type="HAMAP-Rule" id="MF_00377"/>
    </source>
</evidence>
<evidence type="ECO:0000256" key="2">
    <source>
        <dbReference type="SAM" id="MobiDB-lite"/>
    </source>
</evidence>
<sequence length="446" mass="50527">MENISDLWNSALKELEKKVSKPSYETWLKSTTAHNLKKDVLTITAPNEFARDWLESHYSELISETLYDLTGAKLAIRFIIPQSQAEEEIDLPPSKPNSAQDDSNHLPQSMLNPKYTFDTFVIGSGNRFAHAASLAVAEAPAKAYNPLFIYGGVGLGKTHLMHAIGHYVIEHNPNAKVVYLSSEKFTNEFINSIRDNKAVDFRNKYRNVDVLLIDDIQFLAGKEQTQEEFFHTFNALHEESKQIVISSDRPPKEIPTLEDRLRSRFEWGLITDITPPDLETRIAILRKKAKAEGLDIPNEVMLYIANQIDSNIRELEGALIRVVAYSSLINKDINADLAAEALKDIIPNSKPKIISIYDIQKAVGDVYQVKLEDFKAKKRTKSVAFPRQIAMYLSRELTDSSLPKIGEEFGGRDHTTVIHAHEKISKLLKTDTQLQKQVEEINDILK</sequence>
<name>DNAA_BACC1</name>